<organism>
    <name type="scientific">Methanococcus maripaludis (strain DSM 14266 / JCM 13030 / NBRC 101832 / S2 / LL)</name>
    <dbReference type="NCBI Taxonomy" id="267377"/>
    <lineage>
        <taxon>Archaea</taxon>
        <taxon>Methanobacteriati</taxon>
        <taxon>Methanobacteriota</taxon>
        <taxon>Methanomada group</taxon>
        <taxon>Methanococci</taxon>
        <taxon>Methanococcales</taxon>
        <taxon>Methanococcaceae</taxon>
        <taxon>Methanococcus</taxon>
    </lineage>
</organism>
<name>RL37A_METMP</name>
<comment type="function">
    <text evidence="1">Binds to the 23S rRNA.</text>
</comment>
<comment type="cofactor">
    <cofactor evidence="1">
        <name>Zn(2+)</name>
        <dbReference type="ChEBI" id="CHEBI:29105"/>
    </cofactor>
    <text evidence="1">Binds 1 zinc ion per subunit.</text>
</comment>
<comment type="subunit">
    <text evidence="1">Part of the 50S ribosomal subunit.</text>
</comment>
<comment type="similarity">
    <text evidence="1">Belongs to the eukaryotic ribosomal protein eL43 family. Putative zinc-binding subfamily.</text>
</comment>
<evidence type="ECO:0000255" key="1">
    <source>
        <dbReference type="HAMAP-Rule" id="MF_00327"/>
    </source>
</evidence>
<evidence type="ECO:0000305" key="2"/>
<protein>
    <recommendedName>
        <fullName evidence="1">Large ribosomal subunit protein eL43</fullName>
    </recommendedName>
    <alternativeName>
        <fullName evidence="2">50S ribosomal protein L37Ae</fullName>
    </alternativeName>
    <alternativeName>
        <fullName evidence="1">Ribosomal protein L43e</fullName>
    </alternativeName>
</protein>
<dbReference type="EMBL" id="BX950229">
    <property type="protein sequence ID" value="CAF29805.1"/>
    <property type="molecule type" value="Genomic_DNA"/>
</dbReference>
<dbReference type="SMR" id="Q6M0M1"/>
<dbReference type="STRING" id="267377.MMP0249"/>
<dbReference type="EnsemblBacteria" id="CAF29805">
    <property type="protein sequence ID" value="CAF29805"/>
    <property type="gene ID" value="MMP0249"/>
</dbReference>
<dbReference type="KEGG" id="mmp:MMP0249"/>
<dbReference type="PATRIC" id="fig|267377.15.peg.252"/>
<dbReference type="eggNOG" id="arCOG04208">
    <property type="taxonomic scope" value="Archaea"/>
</dbReference>
<dbReference type="HOGENOM" id="CLU_141199_2_0_2"/>
<dbReference type="OrthoDB" id="372011at2157"/>
<dbReference type="Proteomes" id="UP000000590">
    <property type="component" value="Chromosome"/>
</dbReference>
<dbReference type="GO" id="GO:1990904">
    <property type="term" value="C:ribonucleoprotein complex"/>
    <property type="evidence" value="ECO:0007669"/>
    <property type="project" value="UniProtKB-KW"/>
</dbReference>
<dbReference type="GO" id="GO:0005840">
    <property type="term" value="C:ribosome"/>
    <property type="evidence" value="ECO:0007669"/>
    <property type="project" value="UniProtKB-KW"/>
</dbReference>
<dbReference type="GO" id="GO:0070180">
    <property type="term" value="F:large ribosomal subunit rRNA binding"/>
    <property type="evidence" value="ECO:0007669"/>
    <property type="project" value="UniProtKB-UniRule"/>
</dbReference>
<dbReference type="GO" id="GO:0003735">
    <property type="term" value="F:structural constituent of ribosome"/>
    <property type="evidence" value="ECO:0007669"/>
    <property type="project" value="InterPro"/>
</dbReference>
<dbReference type="GO" id="GO:0008270">
    <property type="term" value="F:zinc ion binding"/>
    <property type="evidence" value="ECO:0007669"/>
    <property type="project" value="UniProtKB-UniRule"/>
</dbReference>
<dbReference type="GO" id="GO:0006412">
    <property type="term" value="P:translation"/>
    <property type="evidence" value="ECO:0007669"/>
    <property type="project" value="UniProtKB-UniRule"/>
</dbReference>
<dbReference type="Gene3D" id="2.20.25.30">
    <property type="match status" value="1"/>
</dbReference>
<dbReference type="HAMAP" id="MF_00327">
    <property type="entry name" value="Ribosomal_eL43"/>
    <property type="match status" value="1"/>
</dbReference>
<dbReference type="InterPro" id="IPR011331">
    <property type="entry name" value="Ribosomal_eL37/eL43"/>
</dbReference>
<dbReference type="InterPro" id="IPR002674">
    <property type="entry name" value="Ribosomal_eL43"/>
</dbReference>
<dbReference type="InterPro" id="IPR050522">
    <property type="entry name" value="Ribosomal_protein_eL43"/>
</dbReference>
<dbReference type="InterPro" id="IPR011332">
    <property type="entry name" value="Ribosomal_zn-bd"/>
</dbReference>
<dbReference type="NCBIfam" id="TIGR00280">
    <property type="entry name" value="eL43_euk_arch"/>
    <property type="match status" value="1"/>
</dbReference>
<dbReference type="NCBIfam" id="NF003058">
    <property type="entry name" value="PRK03976.1"/>
    <property type="match status" value="1"/>
</dbReference>
<dbReference type="PANTHER" id="PTHR48129">
    <property type="entry name" value="60S RIBOSOMAL PROTEIN L37A"/>
    <property type="match status" value="1"/>
</dbReference>
<dbReference type="PANTHER" id="PTHR48129:SF1">
    <property type="entry name" value="LARGE RIBOSOMAL SUBUNIT PROTEIN EL43"/>
    <property type="match status" value="1"/>
</dbReference>
<dbReference type="Pfam" id="PF01780">
    <property type="entry name" value="Ribosomal_L37ae"/>
    <property type="match status" value="1"/>
</dbReference>
<dbReference type="SUPFAM" id="SSF57829">
    <property type="entry name" value="Zn-binding ribosomal proteins"/>
    <property type="match status" value="1"/>
</dbReference>
<feature type="chain" id="PRO_0000139845" description="Large ribosomal subunit protein eL43">
    <location>
        <begin position="1"/>
        <end position="96"/>
    </location>
</feature>
<feature type="zinc finger region" description="C4-type" evidence="1">
    <location>
        <begin position="41"/>
        <end position="62"/>
    </location>
</feature>
<feature type="binding site" evidence="1">
    <location>
        <position position="41"/>
    </location>
    <ligand>
        <name>Zn(2+)</name>
        <dbReference type="ChEBI" id="CHEBI:29105"/>
    </ligand>
</feature>
<feature type="binding site" evidence="1">
    <location>
        <position position="44"/>
    </location>
    <ligand>
        <name>Zn(2+)</name>
        <dbReference type="ChEBI" id="CHEBI:29105"/>
    </ligand>
</feature>
<feature type="binding site" evidence="1">
    <location>
        <position position="59"/>
    </location>
    <ligand>
        <name>Zn(2+)</name>
        <dbReference type="ChEBI" id="CHEBI:29105"/>
    </ligand>
</feature>
<feature type="binding site" evidence="1">
    <location>
        <position position="62"/>
    </location>
    <ligand>
        <name>Zn(2+)</name>
        <dbReference type="ChEBI" id="CHEBI:29105"/>
    </ligand>
</feature>
<reference key="1">
    <citation type="journal article" date="2004" name="J. Bacteriol.">
        <title>Complete genome sequence of the genetically tractable hydrogenotrophic methanogen Methanococcus maripaludis.</title>
        <authorList>
            <person name="Hendrickson E.L."/>
            <person name="Kaul R."/>
            <person name="Zhou Y."/>
            <person name="Bovee D."/>
            <person name="Chapman P."/>
            <person name="Chung J."/>
            <person name="Conway de Macario E."/>
            <person name="Dodsworth J.A."/>
            <person name="Gillett W."/>
            <person name="Graham D.E."/>
            <person name="Hackett M."/>
            <person name="Haydock A.K."/>
            <person name="Kang A."/>
            <person name="Land M.L."/>
            <person name="Levy R."/>
            <person name="Lie T.J."/>
            <person name="Major T.A."/>
            <person name="Moore B.C."/>
            <person name="Porat I."/>
            <person name="Palmeiri A."/>
            <person name="Rouse G."/>
            <person name="Saenphimmachak C."/>
            <person name="Soell D."/>
            <person name="Van Dien S."/>
            <person name="Wang T."/>
            <person name="Whitman W.B."/>
            <person name="Xia Q."/>
            <person name="Zhang Y."/>
            <person name="Larimer F.W."/>
            <person name="Olson M.V."/>
            <person name="Leigh J.A."/>
        </authorList>
    </citation>
    <scope>NUCLEOTIDE SEQUENCE [LARGE SCALE GENOMIC DNA]</scope>
    <source>
        <strain>DSM 14266 / JCM 13030 / NBRC 101832 / S2 / LL</strain>
    </source>
</reference>
<accession>Q6M0M1</accession>
<sequence length="96" mass="10675">MVEFSHTKKIGSAGRFGSRYGRKIRVRLRDVEIKQNKDYKCPVCAFPKLKRAGTSIWVCEKCGAKIAGGAYTPETGAGKVVTKAIRRVIESKSREI</sequence>
<keyword id="KW-0479">Metal-binding</keyword>
<keyword id="KW-1185">Reference proteome</keyword>
<keyword id="KW-0687">Ribonucleoprotein</keyword>
<keyword id="KW-0689">Ribosomal protein</keyword>
<keyword id="KW-0694">RNA-binding</keyword>
<keyword id="KW-0699">rRNA-binding</keyword>
<keyword id="KW-0862">Zinc</keyword>
<keyword id="KW-0863">Zinc-finger</keyword>
<proteinExistence type="inferred from homology"/>
<gene>
    <name evidence="1" type="primary">rpl37ae</name>
    <name type="ordered locus">MMP0249</name>
</gene>